<organism>
    <name type="scientific">Salmonella typhimurium (strain LT2 / SGSC1412 / ATCC 700720)</name>
    <dbReference type="NCBI Taxonomy" id="99287"/>
    <lineage>
        <taxon>Bacteria</taxon>
        <taxon>Pseudomonadati</taxon>
        <taxon>Pseudomonadota</taxon>
        <taxon>Gammaproteobacteria</taxon>
        <taxon>Enterobacterales</taxon>
        <taxon>Enterobacteriaceae</taxon>
        <taxon>Salmonella</taxon>
    </lineage>
</organism>
<dbReference type="EC" id="7.-.-.-" evidence="1"/>
<dbReference type="EMBL" id="L12006">
    <property type="protein sequence ID" value="AAA27267.1"/>
    <property type="molecule type" value="Genomic_DNA"/>
</dbReference>
<dbReference type="EMBL" id="AE006468">
    <property type="protein sequence ID" value="AAL20924.1"/>
    <property type="molecule type" value="Genomic_DNA"/>
</dbReference>
<dbReference type="RefSeq" id="NP_460965.1">
    <property type="nucleotide sequence ID" value="NC_003197.2"/>
</dbReference>
<dbReference type="RefSeq" id="WP_000881552.1">
    <property type="nucleotide sequence ID" value="NC_003197.2"/>
</dbReference>
<dbReference type="SMR" id="Q05596"/>
<dbReference type="STRING" id="99287.STM2020"/>
<dbReference type="TCDB" id="3.A.1.23.6">
    <property type="family name" value="the atp-binding cassette (abc) superfamily"/>
</dbReference>
<dbReference type="PaxDb" id="99287-STM2020"/>
<dbReference type="GeneID" id="1253541"/>
<dbReference type="KEGG" id="stm:STM2020"/>
<dbReference type="PATRIC" id="fig|99287.12.peg.2142"/>
<dbReference type="HOGENOM" id="CLU_000604_1_22_6"/>
<dbReference type="OMA" id="TALWITH"/>
<dbReference type="PhylomeDB" id="Q05596"/>
<dbReference type="BioCyc" id="SENT99287:STM2020-MONOMER"/>
<dbReference type="UniPathway" id="UPA00148"/>
<dbReference type="Proteomes" id="UP000001014">
    <property type="component" value="Chromosome"/>
</dbReference>
<dbReference type="GO" id="GO:0043190">
    <property type="term" value="C:ATP-binding cassette (ABC) transporter complex"/>
    <property type="evidence" value="ECO:0000314"/>
    <property type="project" value="UniProtKB"/>
</dbReference>
<dbReference type="GO" id="GO:0005524">
    <property type="term" value="F:ATP binding"/>
    <property type="evidence" value="ECO:0000318"/>
    <property type="project" value="GO_Central"/>
</dbReference>
<dbReference type="GO" id="GO:0016887">
    <property type="term" value="F:ATP hydrolysis activity"/>
    <property type="evidence" value="ECO:0007669"/>
    <property type="project" value="InterPro"/>
</dbReference>
<dbReference type="GO" id="GO:0042626">
    <property type="term" value="F:ATPase-coupled transmembrane transporter activity"/>
    <property type="evidence" value="ECO:0000318"/>
    <property type="project" value="GO_Central"/>
</dbReference>
<dbReference type="GO" id="GO:0009236">
    <property type="term" value="P:cobalamin biosynthetic process"/>
    <property type="evidence" value="ECO:0007669"/>
    <property type="project" value="UniProtKB-UniPathway"/>
</dbReference>
<dbReference type="GO" id="GO:0006824">
    <property type="term" value="P:cobalt ion transport"/>
    <property type="evidence" value="ECO:0000314"/>
    <property type="project" value="UniProtKB"/>
</dbReference>
<dbReference type="CDD" id="cd03225">
    <property type="entry name" value="ABC_cobalt_CbiO_domain1"/>
    <property type="match status" value="1"/>
</dbReference>
<dbReference type="FunFam" id="3.40.50.300:FF:000224">
    <property type="entry name" value="Energy-coupling factor transporter ATP-binding protein EcfA"/>
    <property type="match status" value="1"/>
</dbReference>
<dbReference type="Gene3D" id="3.40.50.300">
    <property type="entry name" value="P-loop containing nucleotide triphosphate hydrolases"/>
    <property type="match status" value="1"/>
</dbReference>
<dbReference type="InterPro" id="IPR003593">
    <property type="entry name" value="AAA+_ATPase"/>
</dbReference>
<dbReference type="InterPro" id="IPR003439">
    <property type="entry name" value="ABC_transporter-like_ATP-bd"/>
</dbReference>
<dbReference type="InterPro" id="IPR017871">
    <property type="entry name" value="ABC_transporter-like_CS"/>
</dbReference>
<dbReference type="InterPro" id="IPR015856">
    <property type="entry name" value="ABC_transpr_CbiO/EcfA_su"/>
</dbReference>
<dbReference type="InterPro" id="IPR005876">
    <property type="entry name" value="Co_trans_ATP-bd"/>
</dbReference>
<dbReference type="InterPro" id="IPR050095">
    <property type="entry name" value="ECF_ABC_transporter_ATP-bd"/>
</dbReference>
<dbReference type="InterPro" id="IPR027417">
    <property type="entry name" value="P-loop_NTPase"/>
</dbReference>
<dbReference type="NCBIfam" id="TIGR01166">
    <property type="entry name" value="cbiO"/>
    <property type="match status" value="1"/>
</dbReference>
<dbReference type="NCBIfam" id="NF010159">
    <property type="entry name" value="PRK13638.1"/>
    <property type="match status" value="1"/>
</dbReference>
<dbReference type="PANTHER" id="PTHR43553:SF24">
    <property type="entry name" value="ENERGY-COUPLING FACTOR TRANSPORTER ATP-BINDING PROTEIN ECFA1"/>
    <property type="match status" value="1"/>
</dbReference>
<dbReference type="PANTHER" id="PTHR43553">
    <property type="entry name" value="HEAVY METAL TRANSPORTER"/>
    <property type="match status" value="1"/>
</dbReference>
<dbReference type="Pfam" id="PF00005">
    <property type="entry name" value="ABC_tran"/>
    <property type="match status" value="1"/>
</dbReference>
<dbReference type="SMART" id="SM00382">
    <property type="entry name" value="AAA"/>
    <property type="match status" value="1"/>
</dbReference>
<dbReference type="SUPFAM" id="SSF52540">
    <property type="entry name" value="P-loop containing nucleoside triphosphate hydrolases"/>
    <property type="match status" value="1"/>
</dbReference>
<dbReference type="PROSITE" id="PS00211">
    <property type="entry name" value="ABC_TRANSPORTER_1"/>
    <property type="match status" value="1"/>
</dbReference>
<dbReference type="PROSITE" id="PS50893">
    <property type="entry name" value="ABC_TRANSPORTER_2"/>
    <property type="match status" value="1"/>
</dbReference>
<dbReference type="PROSITE" id="PS51246">
    <property type="entry name" value="CBIO"/>
    <property type="match status" value="1"/>
</dbReference>
<gene>
    <name evidence="1" type="primary">cbiO</name>
    <name type="ordered locus">STM2020</name>
</gene>
<feature type="chain" id="PRO_0000092059" description="Cobalt import ATP-binding protein CbiO">
    <location>
        <begin position="1"/>
        <end position="271"/>
    </location>
</feature>
<feature type="domain" description="ABC transporter" evidence="1">
    <location>
        <begin position="2"/>
        <end position="236"/>
    </location>
</feature>
<feature type="binding site" evidence="1">
    <location>
        <begin position="34"/>
        <end position="41"/>
    </location>
    <ligand>
        <name>ATP</name>
        <dbReference type="ChEBI" id="CHEBI:30616"/>
    </ligand>
</feature>
<feature type="sequence conflict" description="In Ref. 1; AAA27267." evidence="3" ref="1">
    <original>L</original>
    <variation>R</variation>
    <location>
        <position position="75"/>
    </location>
</feature>
<feature type="sequence conflict" description="In Ref. 1; AAA27267." evidence="3" ref="1">
    <original>V</original>
    <variation>G</variation>
    <location>
        <position position="108"/>
    </location>
</feature>
<protein>
    <recommendedName>
        <fullName evidence="1">Cobalt import ATP-binding protein CbiO</fullName>
        <ecNumber evidence="1">7.-.-.-</ecNumber>
    </recommendedName>
    <alternativeName>
        <fullName evidence="1">Energy-coupling factor transporter ATP-binding protein CbiO</fullName>
        <shortName evidence="1">ECF transporter A component CbiO</shortName>
    </alternativeName>
</protein>
<reference key="1">
    <citation type="journal article" date="1993" name="J. Bacteriol.">
        <title>Characterization of the cobalamin (vitamin B12) biosynthetic genes of Salmonella typhimurium.</title>
        <authorList>
            <person name="Roth J.R."/>
            <person name="Lawrence J.G."/>
            <person name="Rubenfield M."/>
            <person name="Kieffer-Higgins S."/>
            <person name="Church G.M."/>
        </authorList>
    </citation>
    <scope>NUCLEOTIDE SEQUENCE [GENOMIC DNA]</scope>
    <source>
        <strain>LT2</strain>
    </source>
</reference>
<reference key="2">
    <citation type="journal article" date="2001" name="Nature">
        <title>Complete genome sequence of Salmonella enterica serovar Typhimurium LT2.</title>
        <authorList>
            <person name="McClelland M."/>
            <person name="Sanderson K.E."/>
            <person name="Spieth J."/>
            <person name="Clifton S.W."/>
            <person name="Latreille P."/>
            <person name="Courtney L."/>
            <person name="Porwollik S."/>
            <person name="Ali J."/>
            <person name="Dante M."/>
            <person name="Du F."/>
            <person name="Hou S."/>
            <person name="Layman D."/>
            <person name="Leonard S."/>
            <person name="Nguyen C."/>
            <person name="Scott K."/>
            <person name="Holmes A."/>
            <person name="Grewal N."/>
            <person name="Mulvaney E."/>
            <person name="Ryan E."/>
            <person name="Sun H."/>
            <person name="Florea L."/>
            <person name="Miller W."/>
            <person name="Stoneking T."/>
            <person name="Nhan M."/>
            <person name="Waterston R."/>
            <person name="Wilson R.K."/>
        </authorList>
    </citation>
    <scope>NUCLEOTIDE SEQUENCE [LARGE SCALE GENOMIC DNA]</scope>
    <source>
        <strain>LT2 / SGSC1412 / ATCC 700720</strain>
    </source>
</reference>
<reference key="3">
    <citation type="journal article" date="2006" name="J. Bacteriol.">
        <title>Comparative and functional genomic analysis of prokaryotic nickel and cobalt uptake transporters: evidence for a novel group of ATP-binding cassette transporters.</title>
        <authorList>
            <person name="Rodionov D.A."/>
            <person name="Hebbeln P."/>
            <person name="Gelfand M.S."/>
            <person name="Eitinger T."/>
        </authorList>
    </citation>
    <scope>FUNCTION IN COBALT TRANSPORT</scope>
    <scope>SUBSTRATES</scope>
    <scope>SUBUNIT</scope>
    <scope>EXPRESSION IN E.COLI</scope>
    <source>
        <strain>LT2 / SGSC1412 / ATCC 700720</strain>
    </source>
</reference>
<keyword id="KW-0067">ATP-binding</keyword>
<keyword id="KW-0997">Cell inner membrane</keyword>
<keyword id="KW-1003">Cell membrane</keyword>
<keyword id="KW-0169">Cobalamin biosynthesis</keyword>
<keyword id="KW-0170">Cobalt</keyword>
<keyword id="KW-0171">Cobalt transport</keyword>
<keyword id="KW-0406">Ion transport</keyword>
<keyword id="KW-0472">Membrane</keyword>
<keyword id="KW-0547">Nucleotide-binding</keyword>
<keyword id="KW-1185">Reference proteome</keyword>
<keyword id="KW-1278">Translocase</keyword>
<keyword id="KW-0813">Transport</keyword>
<evidence type="ECO:0000255" key="1">
    <source>
        <dbReference type="HAMAP-Rule" id="MF_01710"/>
    </source>
</evidence>
<evidence type="ECO:0000269" key="2">
    <source>
    </source>
</evidence>
<evidence type="ECO:0000305" key="3"/>
<name>CBIO_SALTY</name>
<comment type="function">
    <text evidence="2">Part of the energy-coupling factor (ECF) transporter complex CbiMNOQ involved in cobalt import. The complex confers cobalt uptake upon expression in E.coli; can also transport nickel with a very low affinity. Presumably responsible for energy coupling to the transport system.</text>
</comment>
<comment type="pathway">
    <text evidence="1">Cofactor biosynthesis; adenosylcobalamin biosynthesis.</text>
</comment>
<comment type="subunit">
    <text evidence="1 2">Forms an energy-coupling factor (ECF) transporter complex composed of an ATP-binding protein (A component, CbiO), a transmembrane protein (T component, CbiQ) and 2 possible substrate-capture proteins (S components, CbiM and CbiN) of unknown stoichimetry. Expression of just CbiMN in E.coli confers some cobalt uptake.</text>
</comment>
<comment type="subcellular location">
    <subcellularLocation>
        <location evidence="1">Cell inner membrane</location>
        <topology evidence="1">Peripheral membrane protein</topology>
    </subcellularLocation>
</comment>
<comment type="similarity">
    <text evidence="1">Belongs to the ABC transporter superfamily. Cobalt importer (TC 3.A.1.18.1) family.</text>
</comment>
<sequence>MLATSDLWFRYQNEPVLKGLNMDFSLSPVTGLVGANGCGKSTLFMNLSGLLRPQKGAVLWQGKPLDYSKRGLLALRQQVATVFQDPEQQIFYTDIDSDIAFSLRNLGVPEAEITRRVDEALTLVDAQHFRHQPIQCLSHGQKKRVAIAGALVLQARYLLLDEPTAGLDPAGRTQMIAIIRRIVAQGNHVIISSHDIDLIYEISDAVYVLRQGQILTHGAPGEVFACTEAMEHAGLTQPWLVKLHTQLGLPLCKTETEFFHRMQKCAFREAS</sequence>
<accession>Q05596</accession>
<proteinExistence type="evidence at protein level"/>